<comment type="similarity">
    <text evidence="1">Belongs to the universal ribosomal protein uS2 family.</text>
</comment>
<reference key="1">
    <citation type="journal article" date="2009" name="PLoS Genet.">
        <title>Organised genome dynamics in the Escherichia coli species results in highly diverse adaptive paths.</title>
        <authorList>
            <person name="Touchon M."/>
            <person name="Hoede C."/>
            <person name="Tenaillon O."/>
            <person name="Barbe V."/>
            <person name="Baeriswyl S."/>
            <person name="Bidet P."/>
            <person name="Bingen E."/>
            <person name="Bonacorsi S."/>
            <person name="Bouchier C."/>
            <person name="Bouvet O."/>
            <person name="Calteau A."/>
            <person name="Chiapello H."/>
            <person name="Clermont O."/>
            <person name="Cruveiller S."/>
            <person name="Danchin A."/>
            <person name="Diard M."/>
            <person name="Dossat C."/>
            <person name="Karoui M.E."/>
            <person name="Frapy E."/>
            <person name="Garry L."/>
            <person name="Ghigo J.M."/>
            <person name="Gilles A.M."/>
            <person name="Johnson J."/>
            <person name="Le Bouguenec C."/>
            <person name="Lescat M."/>
            <person name="Mangenot S."/>
            <person name="Martinez-Jehanne V."/>
            <person name="Matic I."/>
            <person name="Nassif X."/>
            <person name="Oztas S."/>
            <person name="Petit M.A."/>
            <person name="Pichon C."/>
            <person name="Rouy Z."/>
            <person name="Ruf C.S."/>
            <person name="Schneider D."/>
            <person name="Tourret J."/>
            <person name="Vacherie B."/>
            <person name="Vallenet D."/>
            <person name="Medigue C."/>
            <person name="Rocha E.P.C."/>
            <person name="Denamur E."/>
        </authorList>
    </citation>
    <scope>NUCLEOTIDE SEQUENCE [LARGE SCALE GENOMIC DNA]</scope>
    <source>
        <strain>UMN026 / ExPEC</strain>
    </source>
</reference>
<protein>
    <recommendedName>
        <fullName evidence="1">Small ribosomal subunit protein uS2</fullName>
    </recommendedName>
    <alternativeName>
        <fullName evidence="2">30S ribosomal protein S2</fullName>
    </alternativeName>
</protein>
<gene>
    <name evidence="1" type="primary">rpsB</name>
    <name type="ordered locus">ECUMN_0166</name>
</gene>
<sequence>MATVSMRDMLKAGVHFGHQTRYWNPKMKPFIFGARNKVHIINLEKTVPMFNEALAELNKIASRKGKILFVGTKRAASEAVKDAALSCDQFFVNHRWLGGMLTNWKTVRQSIKRLKDLETQSQDGTFDKLTKKEALMRTRELEKLENSLGGIKDMGGLPDALFVIDADHEHIAIKEANNLGIPVFAIVDTNSDPDGVDFVIPGNDDAIRAVTLYLGAVAATVREGRSQDLASQAEESFVEAE</sequence>
<accession>B7N836</accession>
<organism>
    <name type="scientific">Escherichia coli O17:K52:H18 (strain UMN026 / ExPEC)</name>
    <dbReference type="NCBI Taxonomy" id="585056"/>
    <lineage>
        <taxon>Bacteria</taxon>
        <taxon>Pseudomonadati</taxon>
        <taxon>Pseudomonadota</taxon>
        <taxon>Gammaproteobacteria</taxon>
        <taxon>Enterobacterales</taxon>
        <taxon>Enterobacteriaceae</taxon>
        <taxon>Escherichia</taxon>
    </lineage>
</organism>
<proteinExistence type="inferred from homology"/>
<evidence type="ECO:0000255" key="1">
    <source>
        <dbReference type="HAMAP-Rule" id="MF_00291"/>
    </source>
</evidence>
<evidence type="ECO:0000305" key="2"/>
<keyword id="KW-0687">Ribonucleoprotein</keyword>
<keyword id="KW-0689">Ribosomal protein</keyword>
<dbReference type="EMBL" id="CU928163">
    <property type="protein sequence ID" value="CAR11386.1"/>
    <property type="molecule type" value="Genomic_DNA"/>
</dbReference>
<dbReference type="RefSeq" id="WP_000246882.1">
    <property type="nucleotide sequence ID" value="NC_011751.1"/>
</dbReference>
<dbReference type="RefSeq" id="YP_002410942.1">
    <property type="nucleotide sequence ID" value="NC_011751.1"/>
</dbReference>
<dbReference type="SMR" id="B7N836"/>
<dbReference type="STRING" id="585056.ECUMN_0166"/>
<dbReference type="GeneID" id="89519558"/>
<dbReference type="KEGG" id="eum:ECUMN_0166"/>
<dbReference type="PATRIC" id="fig|585056.7.peg.358"/>
<dbReference type="HOGENOM" id="CLU_040318_1_2_6"/>
<dbReference type="Proteomes" id="UP000007097">
    <property type="component" value="Chromosome"/>
</dbReference>
<dbReference type="GO" id="GO:0022627">
    <property type="term" value="C:cytosolic small ribosomal subunit"/>
    <property type="evidence" value="ECO:0007669"/>
    <property type="project" value="TreeGrafter"/>
</dbReference>
<dbReference type="GO" id="GO:0003735">
    <property type="term" value="F:structural constituent of ribosome"/>
    <property type="evidence" value="ECO:0007669"/>
    <property type="project" value="InterPro"/>
</dbReference>
<dbReference type="GO" id="GO:0006412">
    <property type="term" value="P:translation"/>
    <property type="evidence" value="ECO:0007669"/>
    <property type="project" value="UniProtKB-UniRule"/>
</dbReference>
<dbReference type="CDD" id="cd01425">
    <property type="entry name" value="RPS2"/>
    <property type="match status" value="1"/>
</dbReference>
<dbReference type="FunFam" id="1.10.287.610:FF:000001">
    <property type="entry name" value="30S ribosomal protein S2"/>
    <property type="match status" value="1"/>
</dbReference>
<dbReference type="Gene3D" id="3.40.50.10490">
    <property type="entry name" value="Glucose-6-phosphate isomerase like protein, domain 1"/>
    <property type="match status" value="1"/>
</dbReference>
<dbReference type="Gene3D" id="1.10.287.610">
    <property type="entry name" value="Helix hairpin bin"/>
    <property type="match status" value="1"/>
</dbReference>
<dbReference type="HAMAP" id="MF_00291_B">
    <property type="entry name" value="Ribosomal_uS2_B"/>
    <property type="match status" value="1"/>
</dbReference>
<dbReference type="InterPro" id="IPR001865">
    <property type="entry name" value="Ribosomal_uS2"/>
</dbReference>
<dbReference type="InterPro" id="IPR005706">
    <property type="entry name" value="Ribosomal_uS2_bac/mit/plastid"/>
</dbReference>
<dbReference type="InterPro" id="IPR018130">
    <property type="entry name" value="Ribosomal_uS2_CS"/>
</dbReference>
<dbReference type="InterPro" id="IPR023591">
    <property type="entry name" value="Ribosomal_uS2_flav_dom_sf"/>
</dbReference>
<dbReference type="NCBIfam" id="TIGR01011">
    <property type="entry name" value="rpsB_bact"/>
    <property type="match status" value="1"/>
</dbReference>
<dbReference type="PANTHER" id="PTHR12534">
    <property type="entry name" value="30S RIBOSOMAL PROTEIN S2 PROKARYOTIC AND ORGANELLAR"/>
    <property type="match status" value="1"/>
</dbReference>
<dbReference type="PANTHER" id="PTHR12534:SF0">
    <property type="entry name" value="SMALL RIBOSOMAL SUBUNIT PROTEIN US2M"/>
    <property type="match status" value="1"/>
</dbReference>
<dbReference type="Pfam" id="PF00318">
    <property type="entry name" value="Ribosomal_S2"/>
    <property type="match status" value="1"/>
</dbReference>
<dbReference type="PRINTS" id="PR00395">
    <property type="entry name" value="RIBOSOMALS2"/>
</dbReference>
<dbReference type="SUPFAM" id="SSF52313">
    <property type="entry name" value="Ribosomal protein S2"/>
    <property type="match status" value="1"/>
</dbReference>
<dbReference type="PROSITE" id="PS00962">
    <property type="entry name" value="RIBOSOMAL_S2_1"/>
    <property type="match status" value="1"/>
</dbReference>
<dbReference type="PROSITE" id="PS00963">
    <property type="entry name" value="RIBOSOMAL_S2_2"/>
    <property type="match status" value="1"/>
</dbReference>
<feature type="chain" id="PRO_1000119427" description="Small ribosomal subunit protein uS2">
    <location>
        <begin position="1"/>
        <end position="241"/>
    </location>
</feature>
<name>RS2_ECOLU</name>